<name>RS20_PSEE4</name>
<feature type="chain" id="PRO_1000014632" description="Small ribosomal subunit protein bS20">
    <location>
        <begin position="1"/>
        <end position="92"/>
    </location>
</feature>
<feature type="region of interest" description="Disordered" evidence="2">
    <location>
        <begin position="1"/>
        <end position="23"/>
    </location>
</feature>
<feature type="compositionally biased region" description="Basic residues" evidence="2">
    <location>
        <begin position="7"/>
        <end position="20"/>
    </location>
</feature>
<comment type="function">
    <text evidence="1">Binds directly to 16S ribosomal RNA.</text>
</comment>
<comment type="similarity">
    <text evidence="1">Belongs to the bacterial ribosomal protein bS20 family.</text>
</comment>
<accession>Q1I4S2</accession>
<dbReference type="EMBL" id="CT573326">
    <property type="protein sequence ID" value="CAK17364.1"/>
    <property type="molecule type" value="Genomic_DNA"/>
</dbReference>
<dbReference type="RefSeq" id="WP_003247625.1">
    <property type="nucleotide sequence ID" value="NC_008027.1"/>
</dbReference>
<dbReference type="SMR" id="Q1I4S2"/>
<dbReference type="STRING" id="384676.PSEEN4695"/>
<dbReference type="GeneID" id="97166133"/>
<dbReference type="KEGG" id="pen:PSEEN4695"/>
<dbReference type="eggNOG" id="COG0268">
    <property type="taxonomic scope" value="Bacteria"/>
</dbReference>
<dbReference type="HOGENOM" id="CLU_160655_4_0_6"/>
<dbReference type="OrthoDB" id="9807974at2"/>
<dbReference type="Proteomes" id="UP000000658">
    <property type="component" value="Chromosome"/>
</dbReference>
<dbReference type="GO" id="GO:0005829">
    <property type="term" value="C:cytosol"/>
    <property type="evidence" value="ECO:0007669"/>
    <property type="project" value="TreeGrafter"/>
</dbReference>
<dbReference type="GO" id="GO:0015935">
    <property type="term" value="C:small ribosomal subunit"/>
    <property type="evidence" value="ECO:0007669"/>
    <property type="project" value="TreeGrafter"/>
</dbReference>
<dbReference type="GO" id="GO:0070181">
    <property type="term" value="F:small ribosomal subunit rRNA binding"/>
    <property type="evidence" value="ECO:0007669"/>
    <property type="project" value="TreeGrafter"/>
</dbReference>
<dbReference type="GO" id="GO:0003735">
    <property type="term" value="F:structural constituent of ribosome"/>
    <property type="evidence" value="ECO:0007669"/>
    <property type="project" value="InterPro"/>
</dbReference>
<dbReference type="GO" id="GO:0006412">
    <property type="term" value="P:translation"/>
    <property type="evidence" value="ECO:0007669"/>
    <property type="project" value="UniProtKB-UniRule"/>
</dbReference>
<dbReference type="FunFam" id="1.20.58.110:FF:000001">
    <property type="entry name" value="30S ribosomal protein S20"/>
    <property type="match status" value="1"/>
</dbReference>
<dbReference type="Gene3D" id="1.20.58.110">
    <property type="entry name" value="Ribosomal protein S20"/>
    <property type="match status" value="1"/>
</dbReference>
<dbReference type="HAMAP" id="MF_00500">
    <property type="entry name" value="Ribosomal_bS20"/>
    <property type="match status" value="1"/>
</dbReference>
<dbReference type="InterPro" id="IPR002583">
    <property type="entry name" value="Ribosomal_bS20"/>
</dbReference>
<dbReference type="InterPro" id="IPR036510">
    <property type="entry name" value="Ribosomal_bS20_sf"/>
</dbReference>
<dbReference type="NCBIfam" id="TIGR00029">
    <property type="entry name" value="S20"/>
    <property type="match status" value="1"/>
</dbReference>
<dbReference type="PANTHER" id="PTHR33398">
    <property type="entry name" value="30S RIBOSOMAL PROTEIN S20"/>
    <property type="match status" value="1"/>
</dbReference>
<dbReference type="PANTHER" id="PTHR33398:SF1">
    <property type="entry name" value="SMALL RIBOSOMAL SUBUNIT PROTEIN BS20C"/>
    <property type="match status" value="1"/>
</dbReference>
<dbReference type="Pfam" id="PF01649">
    <property type="entry name" value="Ribosomal_S20p"/>
    <property type="match status" value="1"/>
</dbReference>
<dbReference type="SUPFAM" id="SSF46992">
    <property type="entry name" value="Ribosomal protein S20"/>
    <property type="match status" value="1"/>
</dbReference>
<gene>
    <name evidence="1" type="primary">rpsT</name>
    <name type="ordered locus">PSEEN4695</name>
</gene>
<protein>
    <recommendedName>
        <fullName evidence="1">Small ribosomal subunit protein bS20</fullName>
    </recommendedName>
    <alternativeName>
        <fullName evidence="3">30S ribosomal protein S20</fullName>
    </alternativeName>
</protein>
<sequence length="92" mass="10069">MANTPSAKKRAKQAEKRRSHNASLRSMVRTYIKNVVKAIDAKDAEKAQAAYVLAVPVIDRMADKGIIHKNKAARHKGRLNGHIKALKEAAAA</sequence>
<proteinExistence type="inferred from homology"/>
<evidence type="ECO:0000255" key="1">
    <source>
        <dbReference type="HAMAP-Rule" id="MF_00500"/>
    </source>
</evidence>
<evidence type="ECO:0000256" key="2">
    <source>
        <dbReference type="SAM" id="MobiDB-lite"/>
    </source>
</evidence>
<evidence type="ECO:0000305" key="3"/>
<reference key="1">
    <citation type="journal article" date="2006" name="Nat. Biotechnol.">
        <title>Complete genome sequence of the entomopathogenic and metabolically versatile soil bacterium Pseudomonas entomophila.</title>
        <authorList>
            <person name="Vodovar N."/>
            <person name="Vallenet D."/>
            <person name="Cruveiller S."/>
            <person name="Rouy Z."/>
            <person name="Barbe V."/>
            <person name="Acosta C."/>
            <person name="Cattolico L."/>
            <person name="Jubin C."/>
            <person name="Lajus A."/>
            <person name="Segurens B."/>
            <person name="Vacherie B."/>
            <person name="Wincker P."/>
            <person name="Weissenbach J."/>
            <person name="Lemaitre B."/>
            <person name="Medigue C."/>
            <person name="Boccard F."/>
        </authorList>
    </citation>
    <scope>NUCLEOTIDE SEQUENCE [LARGE SCALE GENOMIC DNA]</scope>
    <source>
        <strain>L48</strain>
    </source>
</reference>
<keyword id="KW-0687">Ribonucleoprotein</keyword>
<keyword id="KW-0689">Ribosomal protein</keyword>
<keyword id="KW-0694">RNA-binding</keyword>
<keyword id="KW-0699">rRNA-binding</keyword>
<organism>
    <name type="scientific">Pseudomonas entomophila (strain L48)</name>
    <dbReference type="NCBI Taxonomy" id="384676"/>
    <lineage>
        <taxon>Bacteria</taxon>
        <taxon>Pseudomonadati</taxon>
        <taxon>Pseudomonadota</taxon>
        <taxon>Gammaproteobacteria</taxon>
        <taxon>Pseudomonadales</taxon>
        <taxon>Pseudomonadaceae</taxon>
        <taxon>Pseudomonas</taxon>
    </lineage>
</organism>